<dbReference type="EC" id="6.2.1.5" evidence="1"/>
<dbReference type="EMBL" id="AE015928">
    <property type="protein sequence ID" value="AAO75895.1"/>
    <property type="molecule type" value="Genomic_DNA"/>
</dbReference>
<dbReference type="RefSeq" id="NP_809701.1">
    <property type="nucleotide sequence ID" value="NC_004663.1"/>
</dbReference>
<dbReference type="RefSeq" id="WP_008765647.1">
    <property type="nucleotide sequence ID" value="NC_004663.1"/>
</dbReference>
<dbReference type="SMR" id="Q8A9M7"/>
<dbReference type="FunCoup" id="Q8A9M7">
    <property type="interactions" value="518"/>
</dbReference>
<dbReference type="STRING" id="226186.BT_0788"/>
<dbReference type="PaxDb" id="226186-BT_0788"/>
<dbReference type="EnsemblBacteria" id="AAO75895">
    <property type="protein sequence ID" value="AAO75895"/>
    <property type="gene ID" value="BT_0788"/>
</dbReference>
<dbReference type="GeneID" id="60926757"/>
<dbReference type="KEGG" id="bth:BT_0788"/>
<dbReference type="PATRIC" id="fig|226186.12.peg.806"/>
<dbReference type="eggNOG" id="COG0045">
    <property type="taxonomic scope" value="Bacteria"/>
</dbReference>
<dbReference type="HOGENOM" id="CLU_037430_0_2_10"/>
<dbReference type="InParanoid" id="Q8A9M7"/>
<dbReference type="OrthoDB" id="9802602at2"/>
<dbReference type="UniPathway" id="UPA00223">
    <property type="reaction ID" value="UER00999"/>
</dbReference>
<dbReference type="Proteomes" id="UP000001414">
    <property type="component" value="Chromosome"/>
</dbReference>
<dbReference type="GO" id="GO:0005829">
    <property type="term" value="C:cytosol"/>
    <property type="evidence" value="ECO:0000318"/>
    <property type="project" value="GO_Central"/>
</dbReference>
<dbReference type="GO" id="GO:0042709">
    <property type="term" value="C:succinate-CoA ligase complex"/>
    <property type="evidence" value="ECO:0000318"/>
    <property type="project" value="GO_Central"/>
</dbReference>
<dbReference type="GO" id="GO:0005524">
    <property type="term" value="F:ATP binding"/>
    <property type="evidence" value="ECO:0007669"/>
    <property type="project" value="UniProtKB-UniRule"/>
</dbReference>
<dbReference type="GO" id="GO:0000287">
    <property type="term" value="F:magnesium ion binding"/>
    <property type="evidence" value="ECO:0007669"/>
    <property type="project" value="UniProtKB-UniRule"/>
</dbReference>
<dbReference type="GO" id="GO:0004775">
    <property type="term" value="F:succinate-CoA ligase (ADP-forming) activity"/>
    <property type="evidence" value="ECO:0000318"/>
    <property type="project" value="GO_Central"/>
</dbReference>
<dbReference type="GO" id="GO:0004776">
    <property type="term" value="F:succinate-CoA ligase (GDP-forming) activity"/>
    <property type="evidence" value="ECO:0007669"/>
    <property type="project" value="RHEA"/>
</dbReference>
<dbReference type="GO" id="GO:0006104">
    <property type="term" value="P:succinyl-CoA metabolic process"/>
    <property type="evidence" value="ECO:0000318"/>
    <property type="project" value="GO_Central"/>
</dbReference>
<dbReference type="GO" id="GO:0006099">
    <property type="term" value="P:tricarboxylic acid cycle"/>
    <property type="evidence" value="ECO:0000318"/>
    <property type="project" value="GO_Central"/>
</dbReference>
<dbReference type="FunFam" id="3.30.470.20:FF:000002">
    <property type="entry name" value="Succinate--CoA ligase [ADP-forming] subunit beta"/>
    <property type="match status" value="1"/>
</dbReference>
<dbReference type="FunFam" id="3.40.50.261:FF:000007">
    <property type="entry name" value="Succinate--CoA ligase [ADP-forming] subunit beta"/>
    <property type="match status" value="1"/>
</dbReference>
<dbReference type="Gene3D" id="3.30.1490.20">
    <property type="entry name" value="ATP-grasp fold, A domain"/>
    <property type="match status" value="1"/>
</dbReference>
<dbReference type="Gene3D" id="3.30.470.20">
    <property type="entry name" value="ATP-grasp fold, B domain"/>
    <property type="match status" value="1"/>
</dbReference>
<dbReference type="Gene3D" id="3.40.50.261">
    <property type="entry name" value="Succinyl-CoA synthetase domains"/>
    <property type="match status" value="1"/>
</dbReference>
<dbReference type="HAMAP" id="MF_00558">
    <property type="entry name" value="Succ_CoA_beta"/>
    <property type="match status" value="1"/>
</dbReference>
<dbReference type="InterPro" id="IPR011761">
    <property type="entry name" value="ATP-grasp"/>
</dbReference>
<dbReference type="InterPro" id="IPR013650">
    <property type="entry name" value="ATP-grasp_succ-CoA_synth-type"/>
</dbReference>
<dbReference type="InterPro" id="IPR013815">
    <property type="entry name" value="ATP_grasp_subdomain_1"/>
</dbReference>
<dbReference type="InterPro" id="IPR017866">
    <property type="entry name" value="Succ-CoA_synthase_bsu_CS"/>
</dbReference>
<dbReference type="InterPro" id="IPR005811">
    <property type="entry name" value="SUCC_ACL_C"/>
</dbReference>
<dbReference type="InterPro" id="IPR005809">
    <property type="entry name" value="Succ_CoA_ligase-like_bsu"/>
</dbReference>
<dbReference type="InterPro" id="IPR016102">
    <property type="entry name" value="Succinyl-CoA_synth-like"/>
</dbReference>
<dbReference type="NCBIfam" id="NF001913">
    <property type="entry name" value="PRK00696.1"/>
    <property type="match status" value="1"/>
</dbReference>
<dbReference type="NCBIfam" id="TIGR01016">
    <property type="entry name" value="sucCoAbeta"/>
    <property type="match status" value="1"/>
</dbReference>
<dbReference type="PANTHER" id="PTHR11815:SF10">
    <property type="entry name" value="SUCCINATE--COA LIGASE [GDP-FORMING] SUBUNIT BETA, MITOCHONDRIAL"/>
    <property type="match status" value="1"/>
</dbReference>
<dbReference type="PANTHER" id="PTHR11815">
    <property type="entry name" value="SUCCINYL-COA SYNTHETASE BETA CHAIN"/>
    <property type="match status" value="1"/>
</dbReference>
<dbReference type="Pfam" id="PF08442">
    <property type="entry name" value="ATP-grasp_2"/>
    <property type="match status" value="1"/>
</dbReference>
<dbReference type="Pfam" id="PF00549">
    <property type="entry name" value="Ligase_CoA"/>
    <property type="match status" value="1"/>
</dbReference>
<dbReference type="PIRSF" id="PIRSF001554">
    <property type="entry name" value="SucCS_beta"/>
    <property type="match status" value="1"/>
</dbReference>
<dbReference type="SUPFAM" id="SSF56059">
    <property type="entry name" value="Glutathione synthetase ATP-binding domain-like"/>
    <property type="match status" value="1"/>
</dbReference>
<dbReference type="SUPFAM" id="SSF52210">
    <property type="entry name" value="Succinyl-CoA synthetase domains"/>
    <property type="match status" value="1"/>
</dbReference>
<dbReference type="PROSITE" id="PS50975">
    <property type="entry name" value="ATP_GRASP"/>
    <property type="match status" value="1"/>
</dbReference>
<dbReference type="PROSITE" id="PS01217">
    <property type="entry name" value="SUCCINYL_COA_LIG_3"/>
    <property type="match status" value="1"/>
</dbReference>
<comment type="function">
    <text evidence="1">Succinyl-CoA synthetase functions in the citric acid cycle (TCA), coupling the hydrolysis of succinyl-CoA to the synthesis of either ATP or GTP and thus represents the only step of substrate-level phosphorylation in the TCA. The beta subunit provides nucleotide specificity of the enzyme and binds the substrate succinate, while the binding sites for coenzyme A and phosphate are found in the alpha subunit.</text>
</comment>
<comment type="catalytic activity">
    <reaction evidence="1">
        <text>succinate + ATP + CoA = succinyl-CoA + ADP + phosphate</text>
        <dbReference type="Rhea" id="RHEA:17661"/>
        <dbReference type="ChEBI" id="CHEBI:30031"/>
        <dbReference type="ChEBI" id="CHEBI:30616"/>
        <dbReference type="ChEBI" id="CHEBI:43474"/>
        <dbReference type="ChEBI" id="CHEBI:57287"/>
        <dbReference type="ChEBI" id="CHEBI:57292"/>
        <dbReference type="ChEBI" id="CHEBI:456216"/>
        <dbReference type="EC" id="6.2.1.5"/>
    </reaction>
    <physiologicalReaction direction="right-to-left" evidence="1">
        <dbReference type="Rhea" id="RHEA:17663"/>
    </physiologicalReaction>
</comment>
<comment type="catalytic activity">
    <reaction evidence="1">
        <text>GTP + succinate + CoA = succinyl-CoA + GDP + phosphate</text>
        <dbReference type="Rhea" id="RHEA:22120"/>
        <dbReference type="ChEBI" id="CHEBI:30031"/>
        <dbReference type="ChEBI" id="CHEBI:37565"/>
        <dbReference type="ChEBI" id="CHEBI:43474"/>
        <dbReference type="ChEBI" id="CHEBI:57287"/>
        <dbReference type="ChEBI" id="CHEBI:57292"/>
        <dbReference type="ChEBI" id="CHEBI:58189"/>
    </reaction>
    <physiologicalReaction direction="right-to-left" evidence="1">
        <dbReference type="Rhea" id="RHEA:22122"/>
    </physiologicalReaction>
</comment>
<comment type="cofactor">
    <cofactor evidence="1">
        <name>Mg(2+)</name>
        <dbReference type="ChEBI" id="CHEBI:18420"/>
    </cofactor>
    <text evidence="1">Binds 1 Mg(2+) ion per subunit.</text>
</comment>
<comment type="pathway">
    <text evidence="1">Carbohydrate metabolism; tricarboxylic acid cycle; succinate from succinyl-CoA (ligase route): step 1/1.</text>
</comment>
<comment type="subunit">
    <text evidence="1">Heterotetramer of two alpha and two beta subunits.</text>
</comment>
<comment type="similarity">
    <text evidence="1">Belongs to the succinate/malate CoA ligase beta subunit family.</text>
</comment>
<proteinExistence type="inferred from homology"/>
<organism>
    <name type="scientific">Bacteroides thetaiotaomicron (strain ATCC 29148 / DSM 2079 / JCM 5827 / CCUG 10774 / NCTC 10582 / VPI-5482 / E50)</name>
    <dbReference type="NCBI Taxonomy" id="226186"/>
    <lineage>
        <taxon>Bacteria</taxon>
        <taxon>Pseudomonadati</taxon>
        <taxon>Bacteroidota</taxon>
        <taxon>Bacteroidia</taxon>
        <taxon>Bacteroidales</taxon>
        <taxon>Bacteroidaceae</taxon>
        <taxon>Bacteroides</taxon>
    </lineage>
</organism>
<evidence type="ECO:0000255" key="1">
    <source>
        <dbReference type="HAMAP-Rule" id="MF_00558"/>
    </source>
</evidence>
<reference key="1">
    <citation type="journal article" date="2003" name="Science">
        <title>A genomic view of the human-Bacteroides thetaiotaomicron symbiosis.</title>
        <authorList>
            <person name="Xu J."/>
            <person name="Bjursell M.K."/>
            <person name="Himrod J."/>
            <person name="Deng S."/>
            <person name="Carmichael L.K."/>
            <person name="Chiang H.C."/>
            <person name="Hooper L.V."/>
            <person name="Gordon J.I."/>
        </authorList>
    </citation>
    <scope>NUCLEOTIDE SEQUENCE [LARGE SCALE GENOMIC DNA]</scope>
    <source>
        <strain>ATCC 29148 / DSM 2079 / JCM 5827 / CCUG 10774 / NCTC 10582 / VPI-5482 / E50</strain>
    </source>
</reference>
<sequence>MKIHEYQAKEIFSKYGIPVERHTLCRTAAGAVAAYKRMGSDRVVIKAQVLTGGRGKAGGVKLVDNTEDTYQEAKNILGMSIKGLPVNQILVSEAVDIAAEYYVSFTIDRNTRSVILMMSASGGMDIEEVARQSPEKIIRYAIDPFIGLPDYLARRFAFSLFPHIEQAGRMAAILQALYKIFMENDASLVEVNPLALTAKGILMAIDAKIVFDDNALYRHPDVLSLFDPTEEEKVEADAKNKGFSYVHMDGNIGCMVNGAGLAMATMDMIKLHGGNPANFLDIGGSSNPVKVVEAMKLLLQDEKVKVVLINIFGGITRCDDVAIGLIQAFDQIKSDIPVIVRLTGTNEHLGRDLLRNHSRFQIATTMQEAALMAIKS</sequence>
<feature type="chain" id="PRO_1000082017" description="Succinate--CoA ligase [ADP-forming] subunit beta">
    <location>
        <begin position="1"/>
        <end position="376"/>
    </location>
</feature>
<feature type="domain" description="ATP-grasp" evidence="1">
    <location>
        <begin position="9"/>
        <end position="237"/>
    </location>
</feature>
<feature type="binding site" evidence="1">
    <location>
        <position position="46"/>
    </location>
    <ligand>
        <name>ATP</name>
        <dbReference type="ChEBI" id="CHEBI:30616"/>
    </ligand>
</feature>
<feature type="binding site" evidence="1">
    <location>
        <begin position="53"/>
        <end position="55"/>
    </location>
    <ligand>
        <name>ATP</name>
        <dbReference type="ChEBI" id="CHEBI:30616"/>
    </ligand>
</feature>
<feature type="binding site" evidence="1">
    <location>
        <position position="95"/>
    </location>
    <ligand>
        <name>ATP</name>
        <dbReference type="ChEBI" id="CHEBI:30616"/>
    </ligand>
</feature>
<feature type="binding site" evidence="1">
    <location>
        <position position="100"/>
    </location>
    <ligand>
        <name>ATP</name>
        <dbReference type="ChEBI" id="CHEBI:30616"/>
    </ligand>
</feature>
<feature type="binding site" evidence="1">
    <location>
        <position position="192"/>
    </location>
    <ligand>
        <name>Mg(2+)</name>
        <dbReference type="ChEBI" id="CHEBI:18420"/>
    </ligand>
</feature>
<feature type="binding site" evidence="1">
    <location>
        <position position="206"/>
    </location>
    <ligand>
        <name>Mg(2+)</name>
        <dbReference type="ChEBI" id="CHEBI:18420"/>
    </ligand>
</feature>
<feature type="binding site" evidence="1">
    <location>
        <position position="257"/>
    </location>
    <ligand>
        <name>substrate</name>
        <note>ligand shared with subunit alpha</note>
    </ligand>
</feature>
<feature type="binding site" evidence="1">
    <location>
        <begin position="314"/>
        <end position="316"/>
    </location>
    <ligand>
        <name>substrate</name>
        <note>ligand shared with subunit alpha</note>
    </ligand>
</feature>
<keyword id="KW-0067">ATP-binding</keyword>
<keyword id="KW-0436">Ligase</keyword>
<keyword id="KW-0460">Magnesium</keyword>
<keyword id="KW-0479">Metal-binding</keyword>
<keyword id="KW-0547">Nucleotide-binding</keyword>
<keyword id="KW-1185">Reference proteome</keyword>
<keyword id="KW-0816">Tricarboxylic acid cycle</keyword>
<protein>
    <recommendedName>
        <fullName evidence="1">Succinate--CoA ligase [ADP-forming] subunit beta</fullName>
        <ecNumber evidence="1">6.2.1.5</ecNumber>
    </recommendedName>
    <alternativeName>
        <fullName evidence="1">Succinyl-CoA synthetase subunit beta</fullName>
        <shortName evidence="1">SCS-beta</shortName>
    </alternativeName>
</protein>
<gene>
    <name evidence="1" type="primary">sucC</name>
    <name type="ordered locus">BT_0788</name>
</gene>
<name>SUCC_BACTN</name>
<accession>Q8A9M7</accession>